<accession>Q3ZXL8</accession>
<protein>
    <recommendedName>
        <fullName evidence="1">Histidinol-phosphate aminotransferase</fullName>
        <ecNumber evidence="1">2.6.1.9</ecNumber>
    </recommendedName>
    <alternativeName>
        <fullName evidence="1">Imidazole acetol-phosphate transaminase</fullName>
    </alternativeName>
</protein>
<keyword id="KW-0028">Amino-acid biosynthesis</keyword>
<keyword id="KW-0032">Aminotransferase</keyword>
<keyword id="KW-0368">Histidine biosynthesis</keyword>
<keyword id="KW-0663">Pyridoxal phosphate</keyword>
<keyword id="KW-0808">Transferase</keyword>
<reference key="1">
    <citation type="journal article" date="2005" name="Nat. Biotechnol.">
        <title>Genome sequence of the chlorinated compound-respiring bacterium Dehalococcoides species strain CBDB1.</title>
        <authorList>
            <person name="Kube M."/>
            <person name="Beck A."/>
            <person name="Zinder S.H."/>
            <person name="Kuhl H."/>
            <person name="Reinhardt R."/>
            <person name="Adrian L."/>
        </authorList>
    </citation>
    <scope>NUCLEOTIDE SEQUENCE [LARGE SCALE GENOMIC DNA]</scope>
    <source>
        <strain>CBDB1</strain>
    </source>
</reference>
<feature type="chain" id="PRO_0000153355" description="Histidinol-phosphate aminotransferase">
    <location>
        <begin position="1"/>
        <end position="358"/>
    </location>
</feature>
<feature type="modified residue" description="N6-(pyridoxal phosphate)lysine" evidence="1">
    <location>
        <position position="218"/>
    </location>
</feature>
<name>HIS8_DEHMC</name>
<proteinExistence type="inferred from homology"/>
<sequence length="358" mass="40233">MTYNLKKYIRTDLEDFAGYSACKAPELVKTSKLIIKLDANENLYGAAPTVRQAMAEFNQYHIYPDATQSEIRRLLSEYTGVAVEQIVCGAGSDQLIDLLLRLFINPGDEVINCPPTFAMYKFYTELNRGKIVNVPRDASYNINIAAINNAITPQTKLIFIAAPNNPTGTAISKEEIRQILDLGVPTVVDEAYYEFTGQTMVSDMSKYPNLMILRTFSKWAGLAGLRVGYGLFPPIIADYLSRIKDPYSVNIAADAAIRQTMLQREYMLETVKKIVNERQRLYTELSKFGWLKPYPSVANFILCKLLKGKAKEVQHELESKGILVRCFDAPMMENCLRFSVGKPEDTDGLLKALGEMGE</sequence>
<dbReference type="EC" id="2.6.1.9" evidence="1"/>
<dbReference type="EMBL" id="AJ965256">
    <property type="protein sequence ID" value="CAI82970.1"/>
    <property type="molecule type" value="Genomic_DNA"/>
</dbReference>
<dbReference type="RefSeq" id="WP_011309321.1">
    <property type="nucleotide sequence ID" value="NC_007356.1"/>
</dbReference>
<dbReference type="SMR" id="Q3ZXL8"/>
<dbReference type="KEGG" id="deh:cbdbA825"/>
<dbReference type="HOGENOM" id="CLU_017584_3_1_0"/>
<dbReference type="UniPathway" id="UPA00031">
    <property type="reaction ID" value="UER00012"/>
</dbReference>
<dbReference type="Proteomes" id="UP000000433">
    <property type="component" value="Chromosome"/>
</dbReference>
<dbReference type="GO" id="GO:0004400">
    <property type="term" value="F:histidinol-phosphate transaminase activity"/>
    <property type="evidence" value="ECO:0007669"/>
    <property type="project" value="UniProtKB-UniRule"/>
</dbReference>
<dbReference type="GO" id="GO:0030170">
    <property type="term" value="F:pyridoxal phosphate binding"/>
    <property type="evidence" value="ECO:0007669"/>
    <property type="project" value="InterPro"/>
</dbReference>
<dbReference type="GO" id="GO:0000105">
    <property type="term" value="P:L-histidine biosynthetic process"/>
    <property type="evidence" value="ECO:0007669"/>
    <property type="project" value="UniProtKB-UniRule"/>
</dbReference>
<dbReference type="CDD" id="cd00609">
    <property type="entry name" value="AAT_like"/>
    <property type="match status" value="1"/>
</dbReference>
<dbReference type="Gene3D" id="3.90.1150.10">
    <property type="entry name" value="Aspartate Aminotransferase, domain 1"/>
    <property type="match status" value="1"/>
</dbReference>
<dbReference type="Gene3D" id="3.40.640.10">
    <property type="entry name" value="Type I PLP-dependent aspartate aminotransferase-like (Major domain)"/>
    <property type="match status" value="1"/>
</dbReference>
<dbReference type="HAMAP" id="MF_01023">
    <property type="entry name" value="HisC_aminotrans_2"/>
    <property type="match status" value="1"/>
</dbReference>
<dbReference type="InterPro" id="IPR004839">
    <property type="entry name" value="Aminotransferase_I/II_large"/>
</dbReference>
<dbReference type="InterPro" id="IPR005861">
    <property type="entry name" value="HisP_aminotrans"/>
</dbReference>
<dbReference type="InterPro" id="IPR015424">
    <property type="entry name" value="PyrdxlP-dep_Trfase"/>
</dbReference>
<dbReference type="InterPro" id="IPR015421">
    <property type="entry name" value="PyrdxlP-dep_Trfase_major"/>
</dbReference>
<dbReference type="InterPro" id="IPR015422">
    <property type="entry name" value="PyrdxlP-dep_Trfase_small"/>
</dbReference>
<dbReference type="NCBIfam" id="TIGR01141">
    <property type="entry name" value="hisC"/>
    <property type="match status" value="1"/>
</dbReference>
<dbReference type="PANTHER" id="PTHR42885:SF2">
    <property type="entry name" value="HISTIDINOL-PHOSPHATE AMINOTRANSFERASE"/>
    <property type="match status" value="1"/>
</dbReference>
<dbReference type="PANTHER" id="PTHR42885">
    <property type="entry name" value="HISTIDINOL-PHOSPHATE AMINOTRANSFERASE-RELATED"/>
    <property type="match status" value="1"/>
</dbReference>
<dbReference type="Pfam" id="PF00155">
    <property type="entry name" value="Aminotran_1_2"/>
    <property type="match status" value="1"/>
</dbReference>
<dbReference type="SUPFAM" id="SSF53383">
    <property type="entry name" value="PLP-dependent transferases"/>
    <property type="match status" value="1"/>
</dbReference>
<gene>
    <name evidence="1" type="primary">hisC</name>
    <name type="ordered locus">cbdbA825</name>
</gene>
<evidence type="ECO:0000255" key="1">
    <source>
        <dbReference type="HAMAP-Rule" id="MF_01023"/>
    </source>
</evidence>
<comment type="catalytic activity">
    <reaction evidence="1">
        <text>L-histidinol phosphate + 2-oxoglutarate = 3-(imidazol-4-yl)-2-oxopropyl phosphate + L-glutamate</text>
        <dbReference type="Rhea" id="RHEA:23744"/>
        <dbReference type="ChEBI" id="CHEBI:16810"/>
        <dbReference type="ChEBI" id="CHEBI:29985"/>
        <dbReference type="ChEBI" id="CHEBI:57766"/>
        <dbReference type="ChEBI" id="CHEBI:57980"/>
        <dbReference type="EC" id="2.6.1.9"/>
    </reaction>
</comment>
<comment type="cofactor">
    <cofactor evidence="1">
        <name>pyridoxal 5'-phosphate</name>
        <dbReference type="ChEBI" id="CHEBI:597326"/>
    </cofactor>
</comment>
<comment type="pathway">
    <text evidence="1">Amino-acid biosynthesis; L-histidine biosynthesis; L-histidine from 5-phospho-alpha-D-ribose 1-diphosphate: step 7/9.</text>
</comment>
<comment type="subunit">
    <text evidence="1">Homodimer.</text>
</comment>
<comment type="similarity">
    <text evidence="1">Belongs to the class-II pyridoxal-phosphate-dependent aminotransferase family. Histidinol-phosphate aminotransferase subfamily.</text>
</comment>
<organism>
    <name type="scientific">Dehalococcoides mccartyi (strain CBDB1)</name>
    <dbReference type="NCBI Taxonomy" id="255470"/>
    <lineage>
        <taxon>Bacteria</taxon>
        <taxon>Bacillati</taxon>
        <taxon>Chloroflexota</taxon>
        <taxon>Dehalococcoidia</taxon>
        <taxon>Dehalococcoidales</taxon>
        <taxon>Dehalococcoidaceae</taxon>
        <taxon>Dehalococcoides</taxon>
    </lineage>
</organism>